<name>NEP_I01A3</name>
<protein>
    <recommendedName>
        <fullName evidence="1">Nuclear export protein</fullName>
        <shortName evidence="1">NEP</shortName>
    </recommendedName>
    <alternativeName>
        <fullName evidence="1">Non-structural protein 2</fullName>
        <shortName evidence="1">NS2</shortName>
    </alternativeName>
</protein>
<proteinExistence type="inferred from homology"/>
<reference key="1">
    <citation type="journal article" date="2002" name="Proc. Natl. Acad. Sci. U.S.A.">
        <title>Emergence of multiple genotypes of H5N1 avian influenza viruses in Hong Kong SAR.</title>
        <authorList>
            <person name="Guan Y."/>
            <person name="Peiris J.S.M."/>
            <person name="Lipatov A.S."/>
            <person name="Ellis T.M."/>
            <person name="Dyrting K.C."/>
            <person name="Krauss S."/>
            <person name="Zhang L.J."/>
            <person name="Webster R.G."/>
            <person name="Shortridge K.F."/>
        </authorList>
    </citation>
    <scope>NUCLEOTIDE SEQUENCE [GENOMIC RNA]</scope>
</reference>
<sequence length="121" mass="14352">MDSNTVSSFQDILMRMSKMQLGSSSEDLNGMITQFESLKLYRDSLGEAVMRMGDLHSLQIRNGKWREQLSQKFEEIRWLIEEVRHRLKTTENSFEQITFMQALQLLLEVEQEIRTFSFQLI</sequence>
<feature type="chain" id="PRO_0000311731" description="Nuclear export protein">
    <location>
        <begin position="1"/>
        <end position="121"/>
    </location>
</feature>
<feature type="short sequence motif" description="Nuclear export signal" evidence="1">
    <location>
        <begin position="12"/>
        <end position="21"/>
    </location>
</feature>
<feature type="short sequence motif" description="Nuclear export signal" evidence="1">
    <location>
        <begin position="85"/>
        <end position="94"/>
    </location>
</feature>
<comment type="function">
    <text evidence="1">Mediates the nuclear export of encapsidated genomic RNAs (ribonucleoproteins, RNPs). Acts as an adapter between viral RNPs complexes and the nuclear export machinery of the cell. Possesses no intrinsic RNA-binding activity, but includes a C-terminal M1-binding domain. This domain is believed to allow recognition of RNPs bound to the protein M1. Since protein M1 is not available in large quantities before late stages of infection, such an indirect recognition mechanism probably ensures that genomic RNPs are not exported from the host nucleus until sufficient quantities of viral mRNA and progeny genomic RNA have been synthesized. Furthermore, the RNPs enter the host cytoplasm only when associated with the M1 protein that is necessary to guide them to the plasma membrane. May down-regulate viral RNA synthesis when overproduced.</text>
</comment>
<comment type="subunit">
    <text evidence="1">Interacts with protein M1. May interact with host nucleoporin RAB/HRB and exportin XPO1/CRM1.</text>
</comment>
<comment type="subcellular location">
    <subcellularLocation>
        <location evidence="1">Virion</location>
    </subcellularLocation>
    <subcellularLocation>
        <location evidence="1">Host nucleus</location>
    </subcellularLocation>
</comment>
<comment type="alternative products">
    <event type="alternative splicing"/>
    <isoform>
        <id>P0C5U1-1</id>
        <name>NEP</name>
        <name>NS2</name>
        <sequence type="displayed"/>
    </isoform>
    <isoform>
        <id>Q809X2-1</id>
        <name>NS1</name>
        <sequence type="external"/>
    </isoform>
</comment>
<comment type="miscellaneous">
    <text>Average number present in a viral particle is estimated to be 130-200 molecules.</text>
</comment>
<comment type="similarity">
    <text evidence="1">Belongs to the influenza viruses NEP family.</text>
</comment>
<evidence type="ECO:0000255" key="1">
    <source>
        <dbReference type="HAMAP-Rule" id="MF_04067"/>
    </source>
</evidence>
<accession>P0C5U1</accession>
<dbReference type="EMBL" id="AF509075">
    <property type="status" value="NOT_ANNOTATED_CDS"/>
    <property type="molecule type" value="Genomic_DNA"/>
</dbReference>
<dbReference type="SMR" id="P0C5U1"/>
<dbReference type="GO" id="GO:0042025">
    <property type="term" value="C:host cell nucleus"/>
    <property type="evidence" value="ECO:0007669"/>
    <property type="project" value="UniProtKB-SubCell"/>
</dbReference>
<dbReference type="GO" id="GO:0044423">
    <property type="term" value="C:virion component"/>
    <property type="evidence" value="ECO:0007669"/>
    <property type="project" value="UniProtKB-UniRule"/>
</dbReference>
<dbReference type="GO" id="GO:0039675">
    <property type="term" value="P:exit of virus from host cell nucleus through nuclear pore"/>
    <property type="evidence" value="ECO:0007669"/>
    <property type="project" value="UniProtKB-UniRule"/>
</dbReference>
<dbReference type="Gene3D" id="1.10.287.230">
    <property type="match status" value="1"/>
</dbReference>
<dbReference type="Gene3D" id="1.10.287.10">
    <property type="entry name" value="S15/NS1, RNA-binding"/>
    <property type="match status" value="1"/>
</dbReference>
<dbReference type="HAMAP" id="MF_04067">
    <property type="entry name" value="INFV_NEP"/>
    <property type="match status" value="1"/>
</dbReference>
<dbReference type="InterPro" id="IPR000968">
    <property type="entry name" value="Flu_NS2"/>
</dbReference>
<dbReference type="Pfam" id="PF00601">
    <property type="entry name" value="Flu_NS2"/>
    <property type="match status" value="1"/>
</dbReference>
<dbReference type="SUPFAM" id="SSF101156">
    <property type="entry name" value="Nonstructural protein ns2, Nep, M1-binding domain"/>
    <property type="match status" value="1"/>
</dbReference>
<keyword id="KW-0025">Alternative splicing</keyword>
<keyword id="KW-1048">Host nucleus</keyword>
<keyword id="KW-0945">Host-virus interaction</keyword>
<keyword id="KW-0813">Transport</keyword>
<keyword id="KW-0946">Virion</keyword>
<gene>
    <name evidence="1" type="primary">NS</name>
</gene>
<organism>
    <name type="scientific">Influenza A virus (strain A/Chicken/Hong Kong/715.5/2001 H5N1 genotype E)</name>
    <dbReference type="NCBI Taxonomy" id="196434"/>
    <lineage>
        <taxon>Viruses</taxon>
        <taxon>Riboviria</taxon>
        <taxon>Orthornavirae</taxon>
        <taxon>Negarnaviricota</taxon>
        <taxon>Polyploviricotina</taxon>
        <taxon>Insthoviricetes</taxon>
        <taxon>Articulavirales</taxon>
        <taxon>Orthomyxoviridae</taxon>
        <taxon>Alphainfluenzavirus</taxon>
        <taxon>Alphainfluenzavirus influenzae</taxon>
        <taxon>Influenza A virus</taxon>
    </lineage>
</organism>
<organismHost>
    <name type="scientific">Aves</name>
    <dbReference type="NCBI Taxonomy" id="8782"/>
</organismHost>
<organismHost>
    <name type="scientific">Felis catus</name>
    <name type="common">Cat</name>
    <name type="synonym">Felis silvestris catus</name>
    <dbReference type="NCBI Taxonomy" id="9685"/>
</organismHost>
<organismHost>
    <name type="scientific">Homo sapiens</name>
    <name type="common">Human</name>
    <dbReference type="NCBI Taxonomy" id="9606"/>
</organismHost>
<organismHost>
    <name type="scientific">Panthera pardus</name>
    <name type="common">Leopard</name>
    <name type="synonym">Felis pardus</name>
    <dbReference type="NCBI Taxonomy" id="9691"/>
</organismHost>
<organismHost>
    <name type="scientific">Panthera tigris</name>
    <name type="common">Tiger</name>
    <dbReference type="NCBI Taxonomy" id="9694"/>
</organismHost>
<organismHost>
    <name type="scientific">Sus scrofa</name>
    <name type="common">Pig</name>
    <dbReference type="NCBI Taxonomy" id="9823"/>
</organismHost>